<dbReference type="EMBL" id="CR859004">
    <property type="protein sequence ID" value="CAH91199.1"/>
    <property type="molecule type" value="mRNA"/>
</dbReference>
<dbReference type="EMBL" id="CR859096">
    <property type="protein sequence ID" value="CAH91288.1"/>
    <property type="molecule type" value="mRNA"/>
</dbReference>
<dbReference type="RefSeq" id="NP_001128803.1">
    <property type="nucleotide sequence ID" value="NM_001135331.1"/>
</dbReference>
<dbReference type="FunCoup" id="Q5RAL1">
    <property type="interactions" value="1265"/>
</dbReference>
<dbReference type="STRING" id="9601.ENSPPYP00000017451"/>
<dbReference type="GlyCosmos" id="Q5RAL1">
    <property type="glycosylation" value="1 site, No reported glycans"/>
</dbReference>
<dbReference type="Ensembl" id="ENSPPYT00000052513.1">
    <property type="protein sequence ID" value="ENSPPYP00000031860.1"/>
    <property type="gene ID" value="ENSPPYG00000031892.1"/>
</dbReference>
<dbReference type="GeneID" id="100189710"/>
<dbReference type="KEGG" id="pon:100189710"/>
<dbReference type="CTD" id="153339"/>
<dbReference type="eggNOG" id="KOG3808">
    <property type="taxonomic scope" value="Eukaryota"/>
</dbReference>
<dbReference type="GeneTree" id="ENSGT00940000155186"/>
<dbReference type="HOGENOM" id="CLU_152663_1_1_1"/>
<dbReference type="InParanoid" id="Q5RAL1"/>
<dbReference type="OMA" id="KVGFQGT"/>
<dbReference type="OrthoDB" id="10034655at2759"/>
<dbReference type="TreeFam" id="TF300138"/>
<dbReference type="Proteomes" id="UP000001595">
    <property type="component" value="Chromosome 5"/>
</dbReference>
<dbReference type="GO" id="GO:0000139">
    <property type="term" value="C:Golgi membrane"/>
    <property type="evidence" value="ECO:0007669"/>
    <property type="project" value="UniProtKB-SubCell"/>
</dbReference>
<dbReference type="GO" id="GO:0045054">
    <property type="term" value="P:constitutive secretory pathway"/>
    <property type="evidence" value="ECO:0007669"/>
    <property type="project" value="Ensembl"/>
</dbReference>
<dbReference type="InterPro" id="IPR051523">
    <property type="entry name" value="KISH_domain"/>
</dbReference>
<dbReference type="InterPro" id="IPR009653">
    <property type="entry name" value="Ksh1"/>
</dbReference>
<dbReference type="PANTHER" id="PTHR13229">
    <property type="entry name" value="PROTEIN KISH-A"/>
    <property type="match status" value="1"/>
</dbReference>
<dbReference type="Pfam" id="PF06842">
    <property type="entry name" value="DUF1242"/>
    <property type="match status" value="1"/>
</dbReference>
<protein>
    <recommendedName>
        <fullName>Protein kish-A</fullName>
    </recommendedName>
    <alternativeName>
        <fullName>Transmembrane protein 167</fullName>
    </alternativeName>
    <alternativeName>
        <fullName>Transmembrane protein 167A</fullName>
    </alternativeName>
</protein>
<sequence length="72" mass="8060">MSAIFNFQSLLTVILLLICTCAYIRSLAPSLLDRNKTGLLGIFWKCARIGERKSPYVAVCCIVMAFSILFIQ</sequence>
<comment type="function">
    <text evidence="1">Involved in the early part of the secretory pathway.</text>
</comment>
<comment type="subcellular location">
    <subcellularLocation>
        <location evidence="1">Golgi apparatus membrane</location>
        <topology evidence="1">Single-pass type I membrane protein</topology>
    </subcellularLocation>
</comment>
<comment type="similarity">
    <text evidence="3">Belongs to the KISH family.</text>
</comment>
<proteinExistence type="inferred from homology"/>
<accession>Q5RAL1</accession>
<accession>Q5RAC2</accession>
<name>KISHA_PONAB</name>
<reference key="1">
    <citation type="submission" date="2004-11" db="EMBL/GenBank/DDBJ databases">
        <authorList>
            <consortium name="The German cDNA consortium"/>
        </authorList>
    </citation>
    <scope>NUCLEOTIDE SEQUENCE [LARGE SCALE MRNA]</scope>
    <source>
        <tissue>Kidney</tissue>
    </source>
</reference>
<evidence type="ECO:0000250" key="1"/>
<evidence type="ECO:0000255" key="2"/>
<evidence type="ECO:0000305" key="3"/>
<gene>
    <name type="primary">TMEM167A</name>
    <name type="synonym">TMEM167</name>
</gene>
<feature type="signal peptide" evidence="2">
    <location>
        <begin position="1"/>
        <end position="26"/>
    </location>
</feature>
<feature type="chain" id="PRO_0000247770" description="Protein kish-A">
    <location>
        <begin position="27"/>
        <end position="72"/>
    </location>
</feature>
<feature type="topological domain" description="Extracellular" evidence="2">
    <location>
        <begin position="27"/>
        <end position="53"/>
    </location>
</feature>
<feature type="transmembrane region" description="Helical" evidence="2">
    <location>
        <begin position="54"/>
        <end position="71"/>
    </location>
</feature>
<feature type="topological domain" description="Cytoplasmic" evidence="2">
    <location>
        <position position="72"/>
    </location>
</feature>
<feature type="glycosylation site" description="N-linked (GlcNAc...) asparagine" evidence="2">
    <location>
        <position position="35"/>
    </location>
</feature>
<organism>
    <name type="scientific">Pongo abelii</name>
    <name type="common">Sumatran orangutan</name>
    <name type="synonym">Pongo pygmaeus abelii</name>
    <dbReference type="NCBI Taxonomy" id="9601"/>
    <lineage>
        <taxon>Eukaryota</taxon>
        <taxon>Metazoa</taxon>
        <taxon>Chordata</taxon>
        <taxon>Craniata</taxon>
        <taxon>Vertebrata</taxon>
        <taxon>Euteleostomi</taxon>
        <taxon>Mammalia</taxon>
        <taxon>Eutheria</taxon>
        <taxon>Euarchontoglires</taxon>
        <taxon>Primates</taxon>
        <taxon>Haplorrhini</taxon>
        <taxon>Catarrhini</taxon>
        <taxon>Hominidae</taxon>
        <taxon>Pongo</taxon>
    </lineage>
</organism>
<keyword id="KW-0325">Glycoprotein</keyword>
<keyword id="KW-0333">Golgi apparatus</keyword>
<keyword id="KW-0472">Membrane</keyword>
<keyword id="KW-1185">Reference proteome</keyword>
<keyword id="KW-0732">Signal</keyword>
<keyword id="KW-0812">Transmembrane</keyword>
<keyword id="KW-1133">Transmembrane helix</keyword>